<dbReference type="EMBL" id="CP000444">
    <property type="protein sequence ID" value="ABI41224.1"/>
    <property type="molecule type" value="Genomic_DNA"/>
</dbReference>
<dbReference type="SMR" id="Q0I081"/>
<dbReference type="KEGG" id="shm:Shewmr7_0218"/>
<dbReference type="HOGENOM" id="CLU_092403_0_2_6"/>
<dbReference type="GO" id="GO:0015935">
    <property type="term" value="C:small ribosomal subunit"/>
    <property type="evidence" value="ECO:0007669"/>
    <property type="project" value="InterPro"/>
</dbReference>
<dbReference type="GO" id="GO:0019843">
    <property type="term" value="F:rRNA binding"/>
    <property type="evidence" value="ECO:0007669"/>
    <property type="project" value="UniProtKB-UniRule"/>
</dbReference>
<dbReference type="GO" id="GO:0003735">
    <property type="term" value="F:structural constituent of ribosome"/>
    <property type="evidence" value="ECO:0007669"/>
    <property type="project" value="InterPro"/>
</dbReference>
<dbReference type="GO" id="GO:0042274">
    <property type="term" value="P:ribosomal small subunit biogenesis"/>
    <property type="evidence" value="ECO:0007669"/>
    <property type="project" value="TreeGrafter"/>
</dbReference>
<dbReference type="GO" id="GO:0006412">
    <property type="term" value="P:translation"/>
    <property type="evidence" value="ECO:0007669"/>
    <property type="project" value="UniProtKB-UniRule"/>
</dbReference>
<dbReference type="CDD" id="cd00165">
    <property type="entry name" value="S4"/>
    <property type="match status" value="1"/>
</dbReference>
<dbReference type="FunFam" id="1.10.1050.10:FF:000001">
    <property type="entry name" value="30S ribosomal protein S4"/>
    <property type="match status" value="1"/>
</dbReference>
<dbReference type="FunFam" id="3.10.290.10:FF:000001">
    <property type="entry name" value="30S ribosomal protein S4"/>
    <property type="match status" value="1"/>
</dbReference>
<dbReference type="Gene3D" id="1.10.1050.10">
    <property type="entry name" value="Ribosomal Protein S4 Delta 41, Chain A, domain 1"/>
    <property type="match status" value="1"/>
</dbReference>
<dbReference type="Gene3D" id="3.10.290.10">
    <property type="entry name" value="RNA-binding S4 domain"/>
    <property type="match status" value="1"/>
</dbReference>
<dbReference type="HAMAP" id="MF_01306_B">
    <property type="entry name" value="Ribosomal_uS4_B"/>
    <property type="match status" value="1"/>
</dbReference>
<dbReference type="InterPro" id="IPR022801">
    <property type="entry name" value="Ribosomal_uS4"/>
</dbReference>
<dbReference type="InterPro" id="IPR005709">
    <property type="entry name" value="Ribosomal_uS4_bac-type"/>
</dbReference>
<dbReference type="InterPro" id="IPR018079">
    <property type="entry name" value="Ribosomal_uS4_CS"/>
</dbReference>
<dbReference type="InterPro" id="IPR001912">
    <property type="entry name" value="Ribosomal_uS4_N"/>
</dbReference>
<dbReference type="InterPro" id="IPR002942">
    <property type="entry name" value="S4_RNA-bd"/>
</dbReference>
<dbReference type="InterPro" id="IPR036986">
    <property type="entry name" value="S4_RNA-bd_sf"/>
</dbReference>
<dbReference type="NCBIfam" id="NF003717">
    <property type="entry name" value="PRK05327.1"/>
    <property type="match status" value="1"/>
</dbReference>
<dbReference type="NCBIfam" id="TIGR01017">
    <property type="entry name" value="rpsD_bact"/>
    <property type="match status" value="1"/>
</dbReference>
<dbReference type="PANTHER" id="PTHR11831">
    <property type="entry name" value="30S 40S RIBOSOMAL PROTEIN"/>
    <property type="match status" value="1"/>
</dbReference>
<dbReference type="PANTHER" id="PTHR11831:SF4">
    <property type="entry name" value="SMALL RIBOSOMAL SUBUNIT PROTEIN US4M"/>
    <property type="match status" value="1"/>
</dbReference>
<dbReference type="Pfam" id="PF00163">
    <property type="entry name" value="Ribosomal_S4"/>
    <property type="match status" value="1"/>
</dbReference>
<dbReference type="Pfam" id="PF01479">
    <property type="entry name" value="S4"/>
    <property type="match status" value="1"/>
</dbReference>
<dbReference type="SMART" id="SM01390">
    <property type="entry name" value="Ribosomal_S4"/>
    <property type="match status" value="1"/>
</dbReference>
<dbReference type="SMART" id="SM00363">
    <property type="entry name" value="S4"/>
    <property type="match status" value="1"/>
</dbReference>
<dbReference type="SUPFAM" id="SSF55174">
    <property type="entry name" value="Alpha-L RNA-binding motif"/>
    <property type="match status" value="1"/>
</dbReference>
<dbReference type="PROSITE" id="PS00632">
    <property type="entry name" value="RIBOSOMAL_S4"/>
    <property type="match status" value="1"/>
</dbReference>
<dbReference type="PROSITE" id="PS50889">
    <property type="entry name" value="S4"/>
    <property type="match status" value="1"/>
</dbReference>
<reference key="1">
    <citation type="submission" date="2006-08" db="EMBL/GenBank/DDBJ databases">
        <title>Complete sequence of chromosome 1 of Shewanella sp. MR-7.</title>
        <authorList>
            <person name="Copeland A."/>
            <person name="Lucas S."/>
            <person name="Lapidus A."/>
            <person name="Barry K."/>
            <person name="Detter J.C."/>
            <person name="Glavina del Rio T."/>
            <person name="Hammon N."/>
            <person name="Israni S."/>
            <person name="Dalin E."/>
            <person name="Tice H."/>
            <person name="Pitluck S."/>
            <person name="Kiss H."/>
            <person name="Brettin T."/>
            <person name="Bruce D."/>
            <person name="Han C."/>
            <person name="Tapia R."/>
            <person name="Gilna P."/>
            <person name="Schmutz J."/>
            <person name="Larimer F."/>
            <person name="Land M."/>
            <person name="Hauser L."/>
            <person name="Kyrpides N."/>
            <person name="Mikhailova N."/>
            <person name="Nealson K."/>
            <person name="Konstantinidis K."/>
            <person name="Klappenbach J."/>
            <person name="Tiedje J."/>
            <person name="Richardson P."/>
        </authorList>
    </citation>
    <scope>NUCLEOTIDE SEQUENCE [LARGE SCALE GENOMIC DNA]</scope>
    <source>
        <strain>MR-7</strain>
    </source>
</reference>
<evidence type="ECO:0000255" key="1">
    <source>
        <dbReference type="HAMAP-Rule" id="MF_01306"/>
    </source>
</evidence>
<evidence type="ECO:0000305" key="2"/>
<comment type="function">
    <text evidence="1">One of the primary rRNA binding proteins, it binds directly to 16S rRNA where it nucleates assembly of the body of the 30S subunit.</text>
</comment>
<comment type="function">
    <text evidence="1">With S5 and S12 plays an important role in translational accuracy.</text>
</comment>
<comment type="subunit">
    <text evidence="1">Part of the 30S ribosomal subunit. Contacts protein S5. The interaction surface between S4 and S5 is involved in control of translational fidelity.</text>
</comment>
<comment type="similarity">
    <text evidence="1">Belongs to the universal ribosomal protein uS4 family.</text>
</comment>
<protein>
    <recommendedName>
        <fullName evidence="1">Small ribosomal subunit protein uS4</fullName>
    </recommendedName>
    <alternativeName>
        <fullName evidence="2">30S ribosomal protein S4</fullName>
    </alternativeName>
</protein>
<feature type="chain" id="PRO_0000293368" description="Small ribosomal subunit protein uS4">
    <location>
        <begin position="1"/>
        <end position="206"/>
    </location>
</feature>
<feature type="domain" description="S4 RNA-binding" evidence="1">
    <location>
        <begin position="96"/>
        <end position="156"/>
    </location>
</feature>
<proteinExistence type="inferred from homology"/>
<name>RS4_SHESR</name>
<organism>
    <name type="scientific">Shewanella sp. (strain MR-7)</name>
    <dbReference type="NCBI Taxonomy" id="60481"/>
    <lineage>
        <taxon>Bacteria</taxon>
        <taxon>Pseudomonadati</taxon>
        <taxon>Pseudomonadota</taxon>
        <taxon>Gammaproteobacteria</taxon>
        <taxon>Alteromonadales</taxon>
        <taxon>Shewanellaceae</taxon>
        <taxon>Shewanella</taxon>
    </lineage>
</organism>
<gene>
    <name evidence="1" type="primary">rpsD</name>
    <name type="ordered locus">Shewmr7_0218</name>
</gene>
<keyword id="KW-0687">Ribonucleoprotein</keyword>
<keyword id="KW-0689">Ribosomal protein</keyword>
<keyword id="KW-0694">RNA-binding</keyword>
<keyword id="KW-0699">rRNA-binding</keyword>
<accession>Q0I081</accession>
<sequence>MARYLGPKLKLSRREGTDLFLKSGVRAIDSKCKLESAPGQHGARKPRLSEYGLQLREKQKVRRIYGVLEKQFRNYYKEAARLKGNTGENLLQLLETRLDNVVYRMGFGATRAESRQLVSHKSVMVNGRVVNIPSFKVSANDVVSIREKSRTQARIKAALEVAAQREKPTWVEVDSAKMEGAFKRIPERSDLSAEINEQLIVELYSK</sequence>